<accession>Q6CTY9</accession>
<comment type="function">
    <text evidence="2">May play a role in the regulation of cytokinesis.</text>
</comment>
<comment type="subcellular location">
    <subcellularLocation>
        <location evidence="1">Cytoplasm</location>
    </subcellularLocation>
</comment>
<comment type="similarity">
    <text evidence="3">Belongs to the ataxin-10 family.</text>
</comment>
<keyword id="KW-0131">Cell cycle</keyword>
<keyword id="KW-0132">Cell division</keyword>
<keyword id="KW-0963">Cytoplasm</keyword>
<keyword id="KW-1185">Reference proteome</keyword>
<protein>
    <recommendedName>
        <fullName evidence="3">Ataxin-10 homolog</fullName>
    </recommendedName>
    <alternativeName>
        <fullName>Copper transport protein 86</fullName>
    </alternativeName>
</protein>
<sequence length="537" mass="61224">MSEIRWSKLHSLIHDAPSDSGEYITIIDSLNDLIKETTIEDRRNEIASSKDIFFQLRESAILGKSVDLKQACSSQYMRIVKGIVIIARNLSVANQVIPQNILLPNTFLAWYLSISRQTVCTPGDLKQLYGLVCQFYFNCTRTNVVFDESCFDDHMNFMVEMLRFIDDDGIVNAYSLWLSNIMKSDAFISSLLNDIRSLEVIDKLLLRGIIAQKTEIDLLVEEEDEDKNLSSLATIQLKILKQLVTHECFGSYMKTLRKEYGFASFNKMFKIVTMLVTSSERWDLYQLTAILSWTFDIFEEYTYLVDAFFKSESTPEATDAGPLFAILSSVLDILTTLAKYQHAQKYMISYDGVHKIIKLFDILERNCLKIHFNKSSGAKNVDSSAHPVRATDHVGNVITDAVILKKRIHNNRINDSNFPGIKCFLVELLGFMSYEQKDVQDSVRELHGLELVLSNCIIDDNNPFIKERCIICIRYLLANNSTNQEFISQLEAKKAVDGDVLKKAGYKVDIDGKGNIKLTADKRNAASEEQLFEDVQK</sequence>
<feature type="chain" id="PRO_0000280689" description="Ataxin-10 homolog">
    <location>
        <begin position="1"/>
        <end position="537"/>
    </location>
</feature>
<proteinExistence type="inferred from homology"/>
<dbReference type="EMBL" id="CR382123">
    <property type="protein sequence ID" value="CAH01451.1"/>
    <property type="molecule type" value="Genomic_DNA"/>
</dbReference>
<dbReference type="RefSeq" id="XP_452600.1">
    <property type="nucleotide sequence ID" value="XM_452600.1"/>
</dbReference>
<dbReference type="FunCoup" id="Q6CTY9">
    <property type="interactions" value="30"/>
</dbReference>
<dbReference type="PaxDb" id="284590-Q6CTY9"/>
<dbReference type="KEGG" id="kla:KLLA0_C08998g"/>
<dbReference type="eggNOG" id="KOG2676">
    <property type="taxonomic scope" value="Eukaryota"/>
</dbReference>
<dbReference type="HOGENOM" id="CLU_043683_0_0_1"/>
<dbReference type="InParanoid" id="Q6CTY9"/>
<dbReference type="OMA" id="IKERSIM"/>
<dbReference type="Proteomes" id="UP000000598">
    <property type="component" value="Chromosome C"/>
</dbReference>
<dbReference type="GO" id="GO:0005829">
    <property type="term" value="C:cytosol"/>
    <property type="evidence" value="ECO:0007669"/>
    <property type="project" value="TreeGrafter"/>
</dbReference>
<dbReference type="GO" id="GO:0051301">
    <property type="term" value="P:cell division"/>
    <property type="evidence" value="ECO:0007669"/>
    <property type="project" value="UniProtKB-KW"/>
</dbReference>
<dbReference type="InterPro" id="IPR016024">
    <property type="entry name" value="ARM-type_fold"/>
</dbReference>
<dbReference type="InterPro" id="IPR051374">
    <property type="entry name" value="Ataxin-10/CTR86_families"/>
</dbReference>
<dbReference type="InterPro" id="IPR019156">
    <property type="entry name" value="Ataxin-10_domain"/>
</dbReference>
<dbReference type="PANTHER" id="PTHR13255">
    <property type="entry name" value="ATAXIN-10"/>
    <property type="match status" value="1"/>
</dbReference>
<dbReference type="PANTHER" id="PTHR13255:SF0">
    <property type="entry name" value="ATAXIN-10"/>
    <property type="match status" value="1"/>
</dbReference>
<dbReference type="Pfam" id="PF09759">
    <property type="entry name" value="Atx10homo_assoc"/>
    <property type="match status" value="1"/>
</dbReference>
<dbReference type="SUPFAM" id="SSF48371">
    <property type="entry name" value="ARM repeat"/>
    <property type="match status" value="1"/>
</dbReference>
<name>ATX10_KLULA</name>
<gene>
    <name type="primary">CTR86</name>
    <name type="ordered locus">KLLA0C08998g</name>
</gene>
<reference key="1">
    <citation type="journal article" date="2004" name="Nature">
        <title>Genome evolution in yeasts.</title>
        <authorList>
            <person name="Dujon B."/>
            <person name="Sherman D."/>
            <person name="Fischer G."/>
            <person name="Durrens P."/>
            <person name="Casaregola S."/>
            <person name="Lafontaine I."/>
            <person name="de Montigny J."/>
            <person name="Marck C."/>
            <person name="Neuveglise C."/>
            <person name="Talla E."/>
            <person name="Goffard N."/>
            <person name="Frangeul L."/>
            <person name="Aigle M."/>
            <person name="Anthouard V."/>
            <person name="Babour A."/>
            <person name="Barbe V."/>
            <person name="Barnay S."/>
            <person name="Blanchin S."/>
            <person name="Beckerich J.-M."/>
            <person name="Beyne E."/>
            <person name="Bleykasten C."/>
            <person name="Boisrame A."/>
            <person name="Boyer J."/>
            <person name="Cattolico L."/>
            <person name="Confanioleri F."/>
            <person name="de Daruvar A."/>
            <person name="Despons L."/>
            <person name="Fabre E."/>
            <person name="Fairhead C."/>
            <person name="Ferry-Dumazet H."/>
            <person name="Groppi A."/>
            <person name="Hantraye F."/>
            <person name="Hennequin C."/>
            <person name="Jauniaux N."/>
            <person name="Joyet P."/>
            <person name="Kachouri R."/>
            <person name="Kerrest A."/>
            <person name="Koszul R."/>
            <person name="Lemaire M."/>
            <person name="Lesur I."/>
            <person name="Ma L."/>
            <person name="Muller H."/>
            <person name="Nicaud J.-M."/>
            <person name="Nikolski M."/>
            <person name="Oztas S."/>
            <person name="Ozier-Kalogeropoulos O."/>
            <person name="Pellenz S."/>
            <person name="Potier S."/>
            <person name="Richard G.-F."/>
            <person name="Straub M.-L."/>
            <person name="Suleau A."/>
            <person name="Swennen D."/>
            <person name="Tekaia F."/>
            <person name="Wesolowski-Louvel M."/>
            <person name="Westhof E."/>
            <person name="Wirth B."/>
            <person name="Zeniou-Meyer M."/>
            <person name="Zivanovic Y."/>
            <person name="Bolotin-Fukuhara M."/>
            <person name="Thierry A."/>
            <person name="Bouchier C."/>
            <person name="Caudron B."/>
            <person name="Scarpelli C."/>
            <person name="Gaillardin C."/>
            <person name="Weissenbach J."/>
            <person name="Wincker P."/>
            <person name="Souciet J.-L."/>
        </authorList>
    </citation>
    <scope>NUCLEOTIDE SEQUENCE [LARGE SCALE GENOMIC DNA]</scope>
    <source>
        <strain>ATCC 8585 / CBS 2359 / DSM 70799 / NBRC 1267 / NRRL Y-1140 / WM37</strain>
    </source>
</reference>
<organism>
    <name type="scientific">Kluyveromyces lactis (strain ATCC 8585 / CBS 2359 / DSM 70799 / NBRC 1267 / NRRL Y-1140 / WM37)</name>
    <name type="common">Yeast</name>
    <name type="synonym">Candida sphaerica</name>
    <dbReference type="NCBI Taxonomy" id="284590"/>
    <lineage>
        <taxon>Eukaryota</taxon>
        <taxon>Fungi</taxon>
        <taxon>Dikarya</taxon>
        <taxon>Ascomycota</taxon>
        <taxon>Saccharomycotina</taxon>
        <taxon>Saccharomycetes</taxon>
        <taxon>Saccharomycetales</taxon>
        <taxon>Saccharomycetaceae</taxon>
        <taxon>Kluyveromyces</taxon>
    </lineage>
</organism>
<evidence type="ECO:0000250" key="1">
    <source>
        <dbReference type="UniProtKB" id="P25355"/>
    </source>
</evidence>
<evidence type="ECO:0000250" key="2">
    <source>
        <dbReference type="UniProtKB" id="Q9UBB4"/>
    </source>
</evidence>
<evidence type="ECO:0000305" key="3"/>